<organism>
    <name type="scientific">Bordetella bronchiseptica (strain ATCC BAA-588 / NCTC 13252 / RB50)</name>
    <name type="common">Alcaligenes bronchisepticus</name>
    <dbReference type="NCBI Taxonomy" id="257310"/>
    <lineage>
        <taxon>Bacteria</taxon>
        <taxon>Pseudomonadati</taxon>
        <taxon>Pseudomonadota</taxon>
        <taxon>Betaproteobacteria</taxon>
        <taxon>Burkholderiales</taxon>
        <taxon>Alcaligenaceae</taxon>
        <taxon>Bordetella</taxon>
    </lineage>
</organism>
<sequence>MTIGLSVTNDVFARDILTVAQLNQAVGQLLERSIPSLWVRGEISNFTQAASGHWYFTLKDSRAAVRTVMFRSRAAQVGFVPRPGDQVEVRARVSLYEPRGDYQLQADGMRRAGVGNLYEAFLRLKAQLQDEGLFDPQRKRQPARLPRAIGVVTSLHAAALRDVLSALARRAPQVPVIIYPAPVQGADAAARLAARVAQANQRAEVDTLLLVRGGGSIEDLWSFNDEALAREVAASDIPVISGVGHETDFTIVDFVADLRAPTPTAAAELACVPRGDLLAALRHTAERLARAQQRRLDQAAQRLDRAAAMLTSPAQRLAHQQERLNTLRHRLASAWRGPQGRRVARLDMLAQRLAHRRPDTGRAAERSAALLAQLGRAQARLAAARQARLDTLAAQLRALDPQHTLARGYAIVRDAAGAIVTDATRLAARDRIEIAVARGRIGADVTDIGTPDGTDGNPALRRG</sequence>
<accession>Q7WKU2</accession>
<evidence type="ECO:0000255" key="1">
    <source>
        <dbReference type="HAMAP-Rule" id="MF_00378"/>
    </source>
</evidence>
<name>EX7L_BORBR</name>
<reference key="1">
    <citation type="journal article" date="2003" name="Nat. Genet.">
        <title>Comparative analysis of the genome sequences of Bordetella pertussis, Bordetella parapertussis and Bordetella bronchiseptica.</title>
        <authorList>
            <person name="Parkhill J."/>
            <person name="Sebaihia M."/>
            <person name="Preston A."/>
            <person name="Murphy L.D."/>
            <person name="Thomson N.R."/>
            <person name="Harris D.E."/>
            <person name="Holden M.T.G."/>
            <person name="Churcher C.M."/>
            <person name="Bentley S.D."/>
            <person name="Mungall K.L."/>
            <person name="Cerdeno-Tarraga A.-M."/>
            <person name="Temple L."/>
            <person name="James K.D."/>
            <person name="Harris B."/>
            <person name="Quail M.A."/>
            <person name="Achtman M."/>
            <person name="Atkin R."/>
            <person name="Baker S."/>
            <person name="Basham D."/>
            <person name="Bason N."/>
            <person name="Cherevach I."/>
            <person name="Chillingworth T."/>
            <person name="Collins M."/>
            <person name="Cronin A."/>
            <person name="Davis P."/>
            <person name="Doggett J."/>
            <person name="Feltwell T."/>
            <person name="Goble A."/>
            <person name="Hamlin N."/>
            <person name="Hauser H."/>
            <person name="Holroyd S."/>
            <person name="Jagels K."/>
            <person name="Leather S."/>
            <person name="Moule S."/>
            <person name="Norberczak H."/>
            <person name="O'Neil S."/>
            <person name="Ormond D."/>
            <person name="Price C."/>
            <person name="Rabbinowitsch E."/>
            <person name="Rutter S."/>
            <person name="Sanders M."/>
            <person name="Saunders D."/>
            <person name="Seeger K."/>
            <person name="Sharp S."/>
            <person name="Simmonds M."/>
            <person name="Skelton J."/>
            <person name="Squares R."/>
            <person name="Squares S."/>
            <person name="Stevens K."/>
            <person name="Unwin L."/>
            <person name="Whitehead S."/>
            <person name="Barrell B.G."/>
            <person name="Maskell D.J."/>
        </authorList>
    </citation>
    <scope>NUCLEOTIDE SEQUENCE [LARGE SCALE GENOMIC DNA]</scope>
    <source>
        <strain>ATCC BAA-588 / NCTC 13252 / RB50</strain>
    </source>
</reference>
<feature type="chain" id="PRO_0000273645" description="Exodeoxyribonuclease 7 large subunit">
    <location>
        <begin position="1"/>
        <end position="463"/>
    </location>
</feature>
<gene>
    <name evidence="1" type="primary">xseA</name>
    <name type="ordered locus">BB2011</name>
</gene>
<comment type="function">
    <text evidence="1">Bidirectionally degrades single-stranded DNA into large acid-insoluble oligonucleotides, which are then degraded further into small acid-soluble oligonucleotides.</text>
</comment>
<comment type="catalytic activity">
    <reaction evidence="1">
        <text>Exonucleolytic cleavage in either 5'- to 3'- or 3'- to 5'-direction to yield nucleoside 5'-phosphates.</text>
        <dbReference type="EC" id="3.1.11.6"/>
    </reaction>
</comment>
<comment type="subunit">
    <text evidence="1">Heterooligomer composed of large and small subunits.</text>
</comment>
<comment type="subcellular location">
    <subcellularLocation>
        <location evidence="1">Cytoplasm</location>
    </subcellularLocation>
</comment>
<comment type="similarity">
    <text evidence="1">Belongs to the XseA family.</text>
</comment>
<dbReference type="EC" id="3.1.11.6" evidence="1"/>
<dbReference type="EMBL" id="BX640443">
    <property type="protein sequence ID" value="CAE32508.1"/>
    <property type="molecule type" value="Genomic_DNA"/>
</dbReference>
<dbReference type="RefSeq" id="WP_003812887.1">
    <property type="nucleotide sequence ID" value="NC_002927.3"/>
</dbReference>
<dbReference type="SMR" id="Q7WKU2"/>
<dbReference type="GeneID" id="93204353"/>
<dbReference type="KEGG" id="bbr:BB2011"/>
<dbReference type="eggNOG" id="COG1570">
    <property type="taxonomic scope" value="Bacteria"/>
</dbReference>
<dbReference type="HOGENOM" id="CLU_023625_3_1_4"/>
<dbReference type="Proteomes" id="UP000001027">
    <property type="component" value="Chromosome"/>
</dbReference>
<dbReference type="GO" id="GO:0005737">
    <property type="term" value="C:cytoplasm"/>
    <property type="evidence" value="ECO:0007669"/>
    <property type="project" value="UniProtKB-SubCell"/>
</dbReference>
<dbReference type="GO" id="GO:0009318">
    <property type="term" value="C:exodeoxyribonuclease VII complex"/>
    <property type="evidence" value="ECO:0007669"/>
    <property type="project" value="InterPro"/>
</dbReference>
<dbReference type="GO" id="GO:0008855">
    <property type="term" value="F:exodeoxyribonuclease VII activity"/>
    <property type="evidence" value="ECO:0007669"/>
    <property type="project" value="UniProtKB-UniRule"/>
</dbReference>
<dbReference type="GO" id="GO:0003676">
    <property type="term" value="F:nucleic acid binding"/>
    <property type="evidence" value="ECO:0007669"/>
    <property type="project" value="InterPro"/>
</dbReference>
<dbReference type="GO" id="GO:0006308">
    <property type="term" value="P:DNA catabolic process"/>
    <property type="evidence" value="ECO:0007669"/>
    <property type="project" value="UniProtKB-UniRule"/>
</dbReference>
<dbReference type="CDD" id="cd04489">
    <property type="entry name" value="ExoVII_LU_OBF"/>
    <property type="match status" value="1"/>
</dbReference>
<dbReference type="HAMAP" id="MF_00378">
    <property type="entry name" value="Exonuc_7_L"/>
    <property type="match status" value="1"/>
</dbReference>
<dbReference type="InterPro" id="IPR003753">
    <property type="entry name" value="Exonuc_VII_L"/>
</dbReference>
<dbReference type="InterPro" id="IPR020579">
    <property type="entry name" value="Exonuc_VII_lsu_C"/>
</dbReference>
<dbReference type="InterPro" id="IPR025824">
    <property type="entry name" value="OB-fold_nuc-bd_dom"/>
</dbReference>
<dbReference type="NCBIfam" id="TIGR00237">
    <property type="entry name" value="xseA"/>
    <property type="match status" value="1"/>
</dbReference>
<dbReference type="PANTHER" id="PTHR30008">
    <property type="entry name" value="EXODEOXYRIBONUCLEASE 7 LARGE SUBUNIT"/>
    <property type="match status" value="1"/>
</dbReference>
<dbReference type="PANTHER" id="PTHR30008:SF0">
    <property type="entry name" value="EXODEOXYRIBONUCLEASE 7 LARGE SUBUNIT"/>
    <property type="match status" value="1"/>
</dbReference>
<dbReference type="Pfam" id="PF02601">
    <property type="entry name" value="Exonuc_VII_L"/>
    <property type="match status" value="1"/>
</dbReference>
<dbReference type="Pfam" id="PF13742">
    <property type="entry name" value="tRNA_anti_2"/>
    <property type="match status" value="1"/>
</dbReference>
<keyword id="KW-0963">Cytoplasm</keyword>
<keyword id="KW-0269">Exonuclease</keyword>
<keyword id="KW-0378">Hydrolase</keyword>
<keyword id="KW-0540">Nuclease</keyword>
<protein>
    <recommendedName>
        <fullName evidence="1">Exodeoxyribonuclease 7 large subunit</fullName>
        <ecNumber evidence="1">3.1.11.6</ecNumber>
    </recommendedName>
    <alternativeName>
        <fullName evidence="1">Exodeoxyribonuclease VII large subunit</fullName>
        <shortName evidence="1">Exonuclease VII large subunit</shortName>
    </alternativeName>
</protein>
<proteinExistence type="inferred from homology"/>